<keyword id="KW-0963">Cytoplasm</keyword>
<keyword id="KW-0206">Cytoskeleton</keyword>
<keyword id="KW-0342">GTP-binding</keyword>
<keyword id="KW-0378">Hydrolase</keyword>
<keyword id="KW-0460">Magnesium</keyword>
<keyword id="KW-0479">Metal-binding</keyword>
<keyword id="KW-0493">Microtubule</keyword>
<keyword id="KW-0547">Nucleotide-binding</keyword>
<keyword id="KW-1185">Reference proteome</keyword>
<gene>
    <name type="primary">tubB</name>
    <name type="ORF">AN7570</name>
</gene>
<name>TBA2_EMENI</name>
<evidence type="ECO:0000250" key="1"/>
<evidence type="ECO:0000250" key="2">
    <source>
        <dbReference type="UniProtKB" id="P68363"/>
    </source>
</evidence>
<evidence type="ECO:0000305" key="3"/>
<reference key="1">
    <citation type="journal article" date="1991" name="Mol. Gen. Genet.">
        <title>Two alpha-tubulin genes of Aspergillus nidulans encode divergent proteins.</title>
        <authorList>
            <person name="Doshi P."/>
            <person name="Bossie C.A."/>
            <person name="Doonan J.H."/>
            <person name="May G.S."/>
            <person name="Morris N.R."/>
        </authorList>
    </citation>
    <scope>NUCLEOTIDE SEQUENCE [GENOMIC DNA]</scope>
</reference>
<reference key="2">
    <citation type="journal article" date="2005" name="Nature">
        <title>Sequencing of Aspergillus nidulans and comparative analysis with A. fumigatus and A. oryzae.</title>
        <authorList>
            <person name="Galagan J.E."/>
            <person name="Calvo S.E."/>
            <person name="Cuomo C."/>
            <person name="Ma L.-J."/>
            <person name="Wortman J.R."/>
            <person name="Batzoglou S."/>
            <person name="Lee S.-I."/>
            <person name="Bastuerkmen M."/>
            <person name="Spevak C.C."/>
            <person name="Clutterbuck J."/>
            <person name="Kapitonov V."/>
            <person name="Jurka J."/>
            <person name="Scazzocchio C."/>
            <person name="Farman M.L."/>
            <person name="Butler J."/>
            <person name="Purcell S."/>
            <person name="Harris S."/>
            <person name="Braus G.H."/>
            <person name="Draht O."/>
            <person name="Busch S."/>
            <person name="D'Enfert C."/>
            <person name="Bouchier C."/>
            <person name="Goldman G.H."/>
            <person name="Bell-Pedersen D."/>
            <person name="Griffiths-Jones S."/>
            <person name="Doonan J.H."/>
            <person name="Yu J."/>
            <person name="Vienken K."/>
            <person name="Pain A."/>
            <person name="Freitag M."/>
            <person name="Selker E.U."/>
            <person name="Archer D.B."/>
            <person name="Penalva M.A."/>
            <person name="Oakley B.R."/>
            <person name="Momany M."/>
            <person name="Tanaka T."/>
            <person name="Kumagai T."/>
            <person name="Asai K."/>
            <person name="Machida M."/>
            <person name="Nierman W.C."/>
            <person name="Denning D.W."/>
            <person name="Caddick M.X."/>
            <person name="Hynes M."/>
            <person name="Paoletti M."/>
            <person name="Fischer R."/>
            <person name="Miller B.L."/>
            <person name="Dyer P.S."/>
            <person name="Sachs M.S."/>
            <person name="Osmani S.A."/>
            <person name="Birren B.W."/>
        </authorList>
    </citation>
    <scope>NUCLEOTIDE SEQUENCE [LARGE SCALE GENOMIC DNA]</scope>
    <source>
        <strain>FGSC A4 / ATCC 38163 / CBS 112.46 / NRRL 194 / M139</strain>
    </source>
</reference>
<reference key="3">
    <citation type="journal article" date="2009" name="Fungal Genet. Biol.">
        <title>The 2008 update of the Aspergillus nidulans genome annotation: a community effort.</title>
        <authorList>
            <person name="Wortman J.R."/>
            <person name="Gilsenan J.M."/>
            <person name="Joardar V."/>
            <person name="Deegan J."/>
            <person name="Clutterbuck J."/>
            <person name="Andersen M.R."/>
            <person name="Archer D."/>
            <person name="Bencina M."/>
            <person name="Braus G."/>
            <person name="Coutinho P."/>
            <person name="von Dohren H."/>
            <person name="Doonan J."/>
            <person name="Driessen A.J."/>
            <person name="Durek P."/>
            <person name="Espeso E."/>
            <person name="Fekete E."/>
            <person name="Flipphi M."/>
            <person name="Estrada C.G."/>
            <person name="Geysens S."/>
            <person name="Goldman G."/>
            <person name="de Groot P.W."/>
            <person name="Hansen K."/>
            <person name="Harris S.D."/>
            <person name="Heinekamp T."/>
            <person name="Helmstaedt K."/>
            <person name="Henrissat B."/>
            <person name="Hofmann G."/>
            <person name="Homan T."/>
            <person name="Horio T."/>
            <person name="Horiuchi H."/>
            <person name="James S."/>
            <person name="Jones M."/>
            <person name="Karaffa L."/>
            <person name="Karanyi Z."/>
            <person name="Kato M."/>
            <person name="Keller N."/>
            <person name="Kelly D.E."/>
            <person name="Kiel J.A."/>
            <person name="Kim J.M."/>
            <person name="van der Klei I.J."/>
            <person name="Klis F.M."/>
            <person name="Kovalchuk A."/>
            <person name="Krasevec N."/>
            <person name="Kubicek C.P."/>
            <person name="Liu B."/>
            <person name="Maccabe A."/>
            <person name="Meyer V."/>
            <person name="Mirabito P."/>
            <person name="Miskei M."/>
            <person name="Mos M."/>
            <person name="Mullins J."/>
            <person name="Nelson D.R."/>
            <person name="Nielsen J."/>
            <person name="Oakley B.R."/>
            <person name="Osmani S.A."/>
            <person name="Pakula T."/>
            <person name="Paszewski A."/>
            <person name="Paulsen I."/>
            <person name="Pilsyk S."/>
            <person name="Pocsi I."/>
            <person name="Punt P.J."/>
            <person name="Ram A.F."/>
            <person name="Ren Q."/>
            <person name="Robellet X."/>
            <person name="Robson G."/>
            <person name="Seiboth B."/>
            <person name="van Solingen P."/>
            <person name="Specht T."/>
            <person name="Sun J."/>
            <person name="Taheri-Talesh N."/>
            <person name="Takeshita N."/>
            <person name="Ussery D."/>
            <person name="vanKuyk P.A."/>
            <person name="Visser H."/>
            <person name="van de Vondervoort P.J."/>
            <person name="de Vries R.P."/>
            <person name="Walton J."/>
            <person name="Xiang X."/>
            <person name="Xiong Y."/>
            <person name="Zeng A.P."/>
            <person name="Brandt B.W."/>
            <person name="Cornell M.J."/>
            <person name="van den Hondel C.A."/>
            <person name="Visser J."/>
            <person name="Oliver S.G."/>
            <person name="Turner G."/>
        </authorList>
    </citation>
    <scope>GENOME REANNOTATION</scope>
    <source>
        <strain>FGSC A4 / ATCC 38163 / CBS 112.46 / NRRL 194 / M139</strain>
    </source>
</reference>
<accession>P24634</accession>
<accession>C8VBQ7</accession>
<accession>Q5AVW0</accession>
<proteinExistence type="inferred from homology"/>
<dbReference type="EC" id="3.6.5.-" evidence="2"/>
<dbReference type="EMBL" id="AACD01000129">
    <property type="protein sequence ID" value="EAA62150.1"/>
    <property type="molecule type" value="Genomic_DNA"/>
</dbReference>
<dbReference type="EMBL" id="BN001304">
    <property type="protein sequence ID" value="CBF79648.1"/>
    <property type="molecule type" value="Genomic_DNA"/>
</dbReference>
<dbReference type="PIR" id="S13337">
    <property type="entry name" value="S13337"/>
</dbReference>
<dbReference type="RefSeq" id="XP_680839.1">
    <property type="nucleotide sequence ID" value="XM_675747.1"/>
</dbReference>
<dbReference type="SMR" id="P24634"/>
<dbReference type="STRING" id="227321.P24634"/>
<dbReference type="EnsemblFungi" id="CBF79648">
    <property type="protein sequence ID" value="CBF79648"/>
    <property type="gene ID" value="ANIA_07570"/>
</dbReference>
<dbReference type="KEGG" id="ani:ANIA_07570"/>
<dbReference type="VEuPathDB" id="FungiDB:AN7570"/>
<dbReference type="eggNOG" id="KOG1376">
    <property type="taxonomic scope" value="Eukaryota"/>
</dbReference>
<dbReference type="HOGENOM" id="CLU_015718_0_0_1"/>
<dbReference type="InParanoid" id="P24634"/>
<dbReference type="OMA" id="RRVTDNC"/>
<dbReference type="OrthoDB" id="1662883at2759"/>
<dbReference type="Proteomes" id="UP000000560">
    <property type="component" value="Chromosome IV"/>
</dbReference>
<dbReference type="GO" id="GO:0005737">
    <property type="term" value="C:cytoplasm"/>
    <property type="evidence" value="ECO:0000318"/>
    <property type="project" value="GO_Central"/>
</dbReference>
<dbReference type="GO" id="GO:0005874">
    <property type="term" value="C:microtubule"/>
    <property type="evidence" value="ECO:0000318"/>
    <property type="project" value="GO_Central"/>
</dbReference>
<dbReference type="GO" id="GO:0005634">
    <property type="term" value="C:nucleus"/>
    <property type="evidence" value="ECO:0000318"/>
    <property type="project" value="GO_Central"/>
</dbReference>
<dbReference type="GO" id="GO:0005819">
    <property type="term" value="C:spindle"/>
    <property type="evidence" value="ECO:0000318"/>
    <property type="project" value="GO_Central"/>
</dbReference>
<dbReference type="GO" id="GO:0005525">
    <property type="term" value="F:GTP binding"/>
    <property type="evidence" value="ECO:0000318"/>
    <property type="project" value="GO_Central"/>
</dbReference>
<dbReference type="GO" id="GO:0016787">
    <property type="term" value="F:hydrolase activity"/>
    <property type="evidence" value="ECO:0007669"/>
    <property type="project" value="UniProtKB-KW"/>
</dbReference>
<dbReference type="GO" id="GO:0046872">
    <property type="term" value="F:metal ion binding"/>
    <property type="evidence" value="ECO:0007669"/>
    <property type="project" value="UniProtKB-KW"/>
</dbReference>
<dbReference type="GO" id="GO:0005200">
    <property type="term" value="F:structural constituent of cytoskeleton"/>
    <property type="evidence" value="ECO:0000318"/>
    <property type="project" value="GO_Central"/>
</dbReference>
<dbReference type="GO" id="GO:0030437">
    <property type="term" value="P:ascospore formation"/>
    <property type="evidence" value="ECO:0000315"/>
    <property type="project" value="AspGD"/>
</dbReference>
<dbReference type="GO" id="GO:0051321">
    <property type="term" value="P:meiotic cell cycle"/>
    <property type="evidence" value="ECO:0000315"/>
    <property type="project" value="AspGD"/>
</dbReference>
<dbReference type="GO" id="GO:0000226">
    <property type="term" value="P:microtubule cytoskeleton organization"/>
    <property type="evidence" value="ECO:0000318"/>
    <property type="project" value="GO_Central"/>
</dbReference>
<dbReference type="GO" id="GO:0000278">
    <property type="term" value="P:mitotic cell cycle"/>
    <property type="evidence" value="ECO:0000318"/>
    <property type="project" value="GO_Central"/>
</dbReference>
<dbReference type="GO" id="GO:0000280">
    <property type="term" value="P:nuclear division"/>
    <property type="evidence" value="ECO:0000318"/>
    <property type="project" value="GO_Central"/>
</dbReference>
<dbReference type="GO" id="GO:0098863">
    <property type="term" value="P:nuclear migration by microtubule mediated pushing forces"/>
    <property type="evidence" value="ECO:0000318"/>
    <property type="project" value="GO_Central"/>
</dbReference>
<dbReference type="CDD" id="cd02186">
    <property type="entry name" value="alpha_tubulin"/>
    <property type="match status" value="1"/>
</dbReference>
<dbReference type="FunFam" id="1.10.287.600:FF:000005">
    <property type="entry name" value="Tubulin alpha chain"/>
    <property type="match status" value="1"/>
</dbReference>
<dbReference type="FunFam" id="3.30.1330.20:FF:000006">
    <property type="entry name" value="Tubulin alpha chain"/>
    <property type="match status" value="1"/>
</dbReference>
<dbReference type="FunFam" id="3.40.50.1440:FF:000011">
    <property type="entry name" value="Tubulin alpha chain"/>
    <property type="match status" value="1"/>
</dbReference>
<dbReference type="Gene3D" id="1.10.287.600">
    <property type="entry name" value="Helix hairpin bin"/>
    <property type="match status" value="1"/>
</dbReference>
<dbReference type="Gene3D" id="3.30.1330.20">
    <property type="entry name" value="Tubulin/FtsZ, C-terminal domain"/>
    <property type="match status" value="1"/>
</dbReference>
<dbReference type="Gene3D" id="3.40.50.1440">
    <property type="entry name" value="Tubulin/FtsZ, GTPase domain"/>
    <property type="match status" value="1"/>
</dbReference>
<dbReference type="InterPro" id="IPR002452">
    <property type="entry name" value="Alpha_tubulin"/>
</dbReference>
<dbReference type="InterPro" id="IPR008280">
    <property type="entry name" value="Tub_FtsZ_C"/>
</dbReference>
<dbReference type="InterPro" id="IPR000217">
    <property type="entry name" value="Tubulin"/>
</dbReference>
<dbReference type="InterPro" id="IPR037103">
    <property type="entry name" value="Tubulin/FtsZ-like_C"/>
</dbReference>
<dbReference type="InterPro" id="IPR018316">
    <property type="entry name" value="Tubulin/FtsZ_2-layer-sand-dom"/>
</dbReference>
<dbReference type="InterPro" id="IPR036525">
    <property type="entry name" value="Tubulin/FtsZ_GTPase_sf"/>
</dbReference>
<dbReference type="InterPro" id="IPR023123">
    <property type="entry name" value="Tubulin_C"/>
</dbReference>
<dbReference type="InterPro" id="IPR017975">
    <property type="entry name" value="Tubulin_CS"/>
</dbReference>
<dbReference type="InterPro" id="IPR003008">
    <property type="entry name" value="Tubulin_FtsZ_GTPase"/>
</dbReference>
<dbReference type="PANTHER" id="PTHR11588">
    <property type="entry name" value="TUBULIN"/>
    <property type="match status" value="1"/>
</dbReference>
<dbReference type="Pfam" id="PF00091">
    <property type="entry name" value="Tubulin"/>
    <property type="match status" value="1"/>
</dbReference>
<dbReference type="Pfam" id="PF03953">
    <property type="entry name" value="Tubulin_C"/>
    <property type="match status" value="1"/>
</dbReference>
<dbReference type="PRINTS" id="PR01162">
    <property type="entry name" value="ALPHATUBULIN"/>
</dbReference>
<dbReference type="PRINTS" id="PR01161">
    <property type="entry name" value="TUBULIN"/>
</dbReference>
<dbReference type="SMART" id="SM00864">
    <property type="entry name" value="Tubulin"/>
    <property type="match status" value="1"/>
</dbReference>
<dbReference type="SMART" id="SM00865">
    <property type="entry name" value="Tubulin_C"/>
    <property type="match status" value="1"/>
</dbReference>
<dbReference type="SUPFAM" id="SSF55307">
    <property type="entry name" value="Tubulin C-terminal domain-like"/>
    <property type="match status" value="1"/>
</dbReference>
<dbReference type="SUPFAM" id="SSF52490">
    <property type="entry name" value="Tubulin nucleotide-binding domain-like"/>
    <property type="match status" value="1"/>
</dbReference>
<dbReference type="PROSITE" id="PS00227">
    <property type="entry name" value="TUBULIN"/>
    <property type="match status" value="1"/>
</dbReference>
<organism>
    <name type="scientific">Emericella nidulans (strain FGSC A4 / ATCC 38163 / CBS 112.46 / NRRL 194 / M139)</name>
    <name type="common">Aspergillus nidulans</name>
    <dbReference type="NCBI Taxonomy" id="227321"/>
    <lineage>
        <taxon>Eukaryota</taxon>
        <taxon>Fungi</taxon>
        <taxon>Dikarya</taxon>
        <taxon>Ascomycota</taxon>
        <taxon>Pezizomycotina</taxon>
        <taxon>Eurotiomycetes</taxon>
        <taxon>Eurotiomycetidae</taxon>
        <taxon>Eurotiales</taxon>
        <taxon>Aspergillaceae</taxon>
        <taxon>Aspergillus</taxon>
        <taxon>Aspergillus subgen. Nidulantes</taxon>
    </lineage>
</organism>
<sequence length="451" mass="50059">MRGEVCHIHIGQAGTQLGNSAWELYLLEHGLGADGRLDPEKGEDINAGGSFETFFTETGSGKYVPRSIFVDLDPSPIDEIRTGPYRQLFHPEQLISGKEDAANNYARGHYTVGKELVDTVVDRVRRLSDNCSSLQGFLVFHSFGGGTGSGFGALLLERLSTEYGKKSKLEFAVYPSPRVSTAVVEPYNAVLSTHSTIENSDCTFLVDNEAVYDICRRNLDIPRPSFEHLNRLIAQVVSSITSSLRFDGALNVDLNEFQTNLVPFPRIHYPLISYAPVISSNRSSHESFKVQDLTLQCAEPNNQMVVCDPRNGKYMAVALLYRGDCVPRDCTQAIASLKAKASFNLVEWCPTGFKVGINYQKPARVPGSELAPVDRSVSMLSNTTAISEAWSRLDHKFDLMYSKRAFVHWYVGEGMEEGEFSEAREDLAALEKDYEEVAGDSLDMEGEEAEY</sequence>
<protein>
    <recommendedName>
        <fullName>Tubulin alpha-2 chain</fullName>
        <ecNumber evidence="2">3.6.5.-</ecNumber>
    </recommendedName>
</protein>
<feature type="chain" id="PRO_0000048166" description="Tubulin alpha-2 chain">
    <location>
        <begin position="1"/>
        <end position="451"/>
    </location>
</feature>
<feature type="active site" evidence="2">
    <location>
        <position position="256"/>
    </location>
</feature>
<feature type="binding site" evidence="2">
    <location>
        <position position="12"/>
    </location>
    <ligand>
        <name>GTP</name>
        <dbReference type="ChEBI" id="CHEBI:37565"/>
    </ligand>
</feature>
<feature type="binding site" evidence="2">
    <location>
        <position position="73"/>
    </location>
    <ligand>
        <name>GTP</name>
        <dbReference type="ChEBI" id="CHEBI:37565"/>
    </ligand>
</feature>
<feature type="binding site" evidence="2">
    <location>
        <position position="73"/>
    </location>
    <ligand>
        <name>Mg(2+)</name>
        <dbReference type="ChEBI" id="CHEBI:18420"/>
    </ligand>
</feature>
<feature type="binding site" evidence="2">
    <location>
        <position position="142"/>
    </location>
    <ligand>
        <name>GTP</name>
        <dbReference type="ChEBI" id="CHEBI:37565"/>
    </ligand>
</feature>
<feature type="binding site" evidence="2">
    <location>
        <position position="146"/>
    </location>
    <ligand>
        <name>GTP</name>
        <dbReference type="ChEBI" id="CHEBI:37565"/>
    </ligand>
</feature>
<feature type="binding site" evidence="2">
    <location>
        <position position="147"/>
    </location>
    <ligand>
        <name>GTP</name>
        <dbReference type="ChEBI" id="CHEBI:37565"/>
    </ligand>
</feature>
<feature type="binding site" evidence="2">
    <location>
        <position position="181"/>
    </location>
    <ligand>
        <name>GTP</name>
        <dbReference type="ChEBI" id="CHEBI:37565"/>
    </ligand>
</feature>
<feature type="binding site" evidence="2">
    <location>
        <position position="208"/>
    </location>
    <ligand>
        <name>GTP</name>
        <dbReference type="ChEBI" id="CHEBI:37565"/>
    </ligand>
</feature>
<feature type="binding site" evidence="2">
    <location>
        <position position="230"/>
    </location>
    <ligand>
        <name>GTP</name>
        <dbReference type="ChEBI" id="CHEBI:37565"/>
    </ligand>
</feature>
<feature type="site" description="Involved in polymerization" evidence="1">
    <location>
        <position position="451"/>
    </location>
</feature>
<feature type="sequence conflict" description="In Ref. 1." evidence="3" ref="1">
    <original>S</original>
    <variation>C</variation>
    <location>
        <position position="60"/>
    </location>
</feature>
<feature type="sequence conflict" description="In Ref. 1." evidence="3" ref="1">
    <original>I</original>
    <variation>L</variation>
    <location>
        <position position="197"/>
    </location>
</feature>
<feature type="sequence conflict" description="In Ref. 1." evidence="3" ref="1">
    <original>S</original>
    <variation>L</variation>
    <location>
        <position position="284"/>
    </location>
</feature>
<feature type="sequence conflict" description="In Ref. 1." evidence="3" ref="1">
    <original>V</original>
    <variation>R</variation>
    <location>
        <position position="306"/>
    </location>
</feature>
<feature type="sequence conflict" description="In Ref. 1." evidence="3" ref="1">
    <original>L</original>
    <variation>Y</variation>
    <location>
        <position position="345"/>
    </location>
</feature>
<feature type="sequence conflict" description="In Ref. 1." evidence="3" ref="1">
    <original>Q</original>
    <variation>H</variation>
    <location>
        <position position="360"/>
    </location>
</feature>
<feature type="sequence conflict" description="In Ref. 1." evidence="3" ref="1">
    <original>S</original>
    <variation>T</variation>
    <location>
        <position position="368"/>
    </location>
</feature>
<feature type="sequence conflict" description="In Ref. 1." evidence="3" ref="1">
    <original>SVS</original>
    <variation>AVC</variation>
    <location>
        <begin position="376"/>
        <end position="378"/>
    </location>
</feature>
<comment type="function">
    <text>Tubulin is the major constituent of microtubules, a cylinder consisting of laterally associated linear protofilaments composed of alpha- and beta-tubulin heterodimers. Microtubules grow by the addition of GTP-tubulin dimers to the microtubule end, where a stabilizing cap forms. Below the cap, tubulin dimers are in GDP-bound state, owing to GTPase activity of alpha-tubulin.</text>
</comment>
<comment type="catalytic activity">
    <reaction evidence="2">
        <text>GTP + H2O = GDP + phosphate + H(+)</text>
        <dbReference type="Rhea" id="RHEA:19669"/>
        <dbReference type="ChEBI" id="CHEBI:15377"/>
        <dbReference type="ChEBI" id="CHEBI:15378"/>
        <dbReference type="ChEBI" id="CHEBI:37565"/>
        <dbReference type="ChEBI" id="CHEBI:43474"/>
        <dbReference type="ChEBI" id="CHEBI:58189"/>
    </reaction>
    <physiologicalReaction direction="left-to-right" evidence="2">
        <dbReference type="Rhea" id="RHEA:19670"/>
    </physiologicalReaction>
</comment>
<comment type="cofactor">
    <cofactor evidence="2">
        <name>Mg(2+)</name>
        <dbReference type="ChEBI" id="CHEBI:18420"/>
    </cofactor>
</comment>
<comment type="subunit">
    <text>Dimer of alpha and beta chains. A typical microtubule is a hollow water-filled tube with an outer diameter of 25 nm and an inner diameter of 15 nM. Alpha-beta heterodimers associate head-to-tail to form protofilaments running lengthwise along the microtubule wall with the beta-tubulin subunit facing the microtubule plus end conferring a structural polarity. Microtubules usually have 13 protofilaments but different protofilament numbers can be found in some organisms and specialized cells.</text>
</comment>
<comment type="subcellular location">
    <subcellularLocation>
        <location>Cytoplasm</location>
        <location>Cytoskeleton</location>
    </subcellularLocation>
</comment>
<comment type="similarity">
    <text evidence="3">Belongs to the tubulin family.</text>
</comment>